<name>ANMK_PARM1</name>
<organism>
    <name type="scientific">Paramagnetospirillum magneticum (strain ATCC 700264 / AMB-1)</name>
    <name type="common">Magnetospirillum magneticum</name>
    <dbReference type="NCBI Taxonomy" id="342108"/>
    <lineage>
        <taxon>Bacteria</taxon>
        <taxon>Pseudomonadati</taxon>
        <taxon>Pseudomonadota</taxon>
        <taxon>Alphaproteobacteria</taxon>
        <taxon>Rhodospirillales</taxon>
        <taxon>Magnetospirillaceae</taxon>
        <taxon>Paramagnetospirillum</taxon>
    </lineage>
</organism>
<gene>
    <name evidence="1" type="primary">anmK</name>
    <name type="ordered locus">amb3034</name>
</gene>
<dbReference type="EC" id="2.7.1.170" evidence="1"/>
<dbReference type="EMBL" id="AP007255">
    <property type="protein sequence ID" value="BAE51838.1"/>
    <property type="molecule type" value="Genomic_DNA"/>
</dbReference>
<dbReference type="RefSeq" id="WP_011385410.1">
    <property type="nucleotide sequence ID" value="NC_007626.1"/>
</dbReference>
<dbReference type="SMR" id="Q2W2T7"/>
<dbReference type="STRING" id="342108.amb3034"/>
<dbReference type="KEGG" id="mag:amb3034"/>
<dbReference type="HOGENOM" id="CLU_038782_3_0_5"/>
<dbReference type="OrthoDB" id="9763949at2"/>
<dbReference type="UniPathway" id="UPA00343"/>
<dbReference type="UniPathway" id="UPA00544"/>
<dbReference type="Proteomes" id="UP000007058">
    <property type="component" value="Chromosome"/>
</dbReference>
<dbReference type="GO" id="GO:0005524">
    <property type="term" value="F:ATP binding"/>
    <property type="evidence" value="ECO:0007669"/>
    <property type="project" value="UniProtKB-UniRule"/>
</dbReference>
<dbReference type="GO" id="GO:0016301">
    <property type="term" value="F:kinase activity"/>
    <property type="evidence" value="ECO:0007669"/>
    <property type="project" value="UniProtKB-KW"/>
</dbReference>
<dbReference type="GO" id="GO:0016773">
    <property type="term" value="F:phosphotransferase activity, alcohol group as acceptor"/>
    <property type="evidence" value="ECO:0007669"/>
    <property type="project" value="UniProtKB-UniRule"/>
</dbReference>
<dbReference type="GO" id="GO:0097175">
    <property type="term" value="P:1,6-anhydro-N-acetyl-beta-muramic acid catabolic process"/>
    <property type="evidence" value="ECO:0007669"/>
    <property type="project" value="UniProtKB-UniRule"/>
</dbReference>
<dbReference type="GO" id="GO:0006040">
    <property type="term" value="P:amino sugar metabolic process"/>
    <property type="evidence" value="ECO:0007669"/>
    <property type="project" value="InterPro"/>
</dbReference>
<dbReference type="GO" id="GO:0009254">
    <property type="term" value="P:peptidoglycan turnover"/>
    <property type="evidence" value="ECO:0007669"/>
    <property type="project" value="UniProtKB-UniRule"/>
</dbReference>
<dbReference type="Gene3D" id="3.30.420.40">
    <property type="match status" value="2"/>
</dbReference>
<dbReference type="HAMAP" id="MF_01270">
    <property type="entry name" value="AnhMurNAc_kinase"/>
    <property type="match status" value="1"/>
</dbReference>
<dbReference type="InterPro" id="IPR005338">
    <property type="entry name" value="Anhydro_N_Ac-Mur_kinase"/>
</dbReference>
<dbReference type="InterPro" id="IPR043129">
    <property type="entry name" value="ATPase_NBD"/>
</dbReference>
<dbReference type="NCBIfam" id="NF007141">
    <property type="entry name" value="PRK09585.1-5"/>
    <property type="match status" value="1"/>
</dbReference>
<dbReference type="PANTHER" id="PTHR30605">
    <property type="entry name" value="ANHYDRO-N-ACETYLMURAMIC ACID KINASE"/>
    <property type="match status" value="1"/>
</dbReference>
<dbReference type="PANTHER" id="PTHR30605:SF0">
    <property type="entry name" value="ANHYDRO-N-ACETYLMURAMIC ACID KINASE"/>
    <property type="match status" value="1"/>
</dbReference>
<dbReference type="Pfam" id="PF03702">
    <property type="entry name" value="AnmK"/>
    <property type="match status" value="1"/>
</dbReference>
<dbReference type="SUPFAM" id="SSF53067">
    <property type="entry name" value="Actin-like ATPase domain"/>
    <property type="match status" value="1"/>
</dbReference>
<proteinExistence type="inferred from homology"/>
<evidence type="ECO:0000255" key="1">
    <source>
        <dbReference type="HAMAP-Rule" id="MF_01270"/>
    </source>
</evidence>
<accession>Q2W2T7</accession>
<reference key="1">
    <citation type="journal article" date="2005" name="DNA Res.">
        <title>Complete genome sequence of the facultative anaerobic magnetotactic bacterium Magnetospirillum sp. strain AMB-1.</title>
        <authorList>
            <person name="Matsunaga T."/>
            <person name="Okamura Y."/>
            <person name="Fukuda Y."/>
            <person name="Wahyudi A.T."/>
            <person name="Murase Y."/>
            <person name="Takeyama H."/>
        </authorList>
    </citation>
    <scope>NUCLEOTIDE SEQUENCE [LARGE SCALE GENOMIC DNA]</scope>
    <source>
        <strain>ATCC 700264 / AMB-1</strain>
    </source>
</reference>
<keyword id="KW-0067">ATP-binding</keyword>
<keyword id="KW-0119">Carbohydrate metabolism</keyword>
<keyword id="KW-0418">Kinase</keyword>
<keyword id="KW-0547">Nucleotide-binding</keyword>
<keyword id="KW-0808">Transferase</keyword>
<feature type="chain" id="PRO_0000250011" description="Anhydro-N-acetylmuramic acid kinase">
    <location>
        <begin position="1"/>
        <end position="355"/>
    </location>
</feature>
<feature type="binding site" evidence="1">
    <location>
        <begin position="9"/>
        <end position="16"/>
    </location>
    <ligand>
        <name>ATP</name>
        <dbReference type="ChEBI" id="CHEBI:30616"/>
    </ligand>
</feature>
<protein>
    <recommendedName>
        <fullName evidence="1">Anhydro-N-acetylmuramic acid kinase</fullName>
        <ecNumber evidence="1">2.7.1.170</ecNumber>
    </recommendedName>
    <alternativeName>
        <fullName evidence="1">AnhMurNAc kinase</fullName>
    </alternativeName>
</protein>
<sequence length="355" mass="37036">MLALGLMSGTSLDGVDVALLETDGETVARFGPATTVPYGDEQRIALMGVLGGKGPVEQVERDFTLFHAQVVRDFLAAQGIDAATVGVAGFHGHTILHAPAERRTWQIGDGALLASEIGIPVVNDFRSADVAAGGQGAPLVPVYHRALAAGLEAPLAILNLGGVGNVTWISDDGSLLAFDTGPGNALLDDWALAHTGRPVDVDGRLAAAGKVRRDAVEAFLHHTYFDCQPPKSVDRDEFHALAWELVKGCSAEDGAATLTAFTAAAVALAAYSFPRPVKRWLVTGGGRRNPEMMTALSRGLSAPVEPVEAVGWNGDALEAQAFAFLAVRSLAGKMLTYPETTGAPAPQTGGRHHVP</sequence>
<comment type="function">
    <text evidence="1">Catalyzes the specific phosphorylation of 1,6-anhydro-N-acetylmuramic acid (anhMurNAc) with the simultaneous cleavage of the 1,6-anhydro ring, generating MurNAc-6-P. Is required for the utilization of anhMurNAc either imported from the medium or derived from its own cell wall murein, and thus plays a role in cell wall recycling.</text>
</comment>
<comment type="catalytic activity">
    <reaction evidence="1">
        <text>1,6-anhydro-N-acetyl-beta-muramate + ATP + H2O = N-acetyl-D-muramate 6-phosphate + ADP + H(+)</text>
        <dbReference type="Rhea" id="RHEA:24952"/>
        <dbReference type="ChEBI" id="CHEBI:15377"/>
        <dbReference type="ChEBI" id="CHEBI:15378"/>
        <dbReference type="ChEBI" id="CHEBI:30616"/>
        <dbReference type="ChEBI" id="CHEBI:58690"/>
        <dbReference type="ChEBI" id="CHEBI:58722"/>
        <dbReference type="ChEBI" id="CHEBI:456216"/>
        <dbReference type="EC" id="2.7.1.170"/>
    </reaction>
</comment>
<comment type="pathway">
    <text evidence="1">Amino-sugar metabolism; 1,6-anhydro-N-acetylmuramate degradation.</text>
</comment>
<comment type="pathway">
    <text evidence="1">Cell wall biogenesis; peptidoglycan recycling.</text>
</comment>
<comment type="similarity">
    <text evidence="1">Belongs to the anhydro-N-acetylmuramic acid kinase family.</text>
</comment>